<protein>
    <recommendedName>
        <fullName>Bradykinin-potentiating and C-type natriuretic peptides</fullName>
    </recommendedName>
    <alternativeName>
        <fullName>Angiotensin-converting enzyme inhibitor</fullName>
    </alternativeName>
    <alternativeName>
        <fullName>BPP-CNP homolog</fullName>
    </alternativeName>
    <component>
        <recommendedName>
            <fullName evidence="17">Bradykinin-potentiating peptide 13a</fullName>
            <shortName evidence="17">BPP-13a</shortName>
        </recommendedName>
        <alternativeName>
            <fullName evidence="17">Bradykinin-potentiating peptide S3,1</fullName>
        </alternativeName>
    </component>
    <component>
        <recommendedName>
            <fullName evidence="17">Bradykinin-potentiating peptide 10c</fullName>
            <shortName evidence="17">BPP-10c</shortName>
            <shortName evidence="15">BPP-2</shortName>
        </recommendedName>
        <alternativeName>
            <fullName evidence="17">Bradykinin-potentiating peptide S4,3,1</fullName>
        </alternativeName>
    </component>
    <component>
        <recommendedName>
            <fullName evidence="5">Bradykinin-potentiating peptide 12b</fullName>
            <shortName evidence="5">BPP-12b</shortName>
        </recommendedName>
        <alternativeName>
            <fullName evidence="17">Bradykinin-potentiating peptide S4,3,2</fullName>
        </alternativeName>
    </component>
    <component>
        <recommendedName>
            <fullName evidence="5">Bradykinin-potentiating peptide 11e</fullName>
            <shortName evidence="5">BPP-11e</shortName>
        </recommendedName>
    </component>
    <component>
        <recommendedName>
            <fullName evidence="17">Bradykinin-potentiating peptide 5a</fullName>
            <shortName evidence="17">BPP-5a</shortName>
        </recommendedName>
        <alternativeName>
            <fullName evidence="17">Bradykinin-potentiating peptide S5,2</fullName>
        </alternativeName>
        <alternativeName>
            <fullName evidence="4">Bradykinin-potentiating peptide Va</fullName>
            <shortName evidence="4">BPPVa</shortName>
        </alternativeName>
        <alternativeName>
            <fullName evidence="16">Proline-rich peptide 5a</fullName>
            <shortName evidence="16">PRO-5a</shortName>
        </alternativeName>
    </component>
    <component>
        <recommendedName>
            <fullName>C-type natriuretic peptide</fullName>
            <shortName>CNP</shortName>
        </recommendedName>
    </component>
</protein>
<keyword id="KW-0165">Cleavage on pair of basic residues</keyword>
<keyword id="KW-0963">Cytoplasm</keyword>
<keyword id="KW-0903">Direct protein sequencing</keyword>
<keyword id="KW-1015">Disulfide bond</keyword>
<keyword id="KW-1214">G-protein coupled acetylcholine receptor impairing toxin</keyword>
<keyword id="KW-1213">G-protein coupled receptor impairing toxin</keyword>
<keyword id="KW-0382">Hypotensive agent</keyword>
<keyword id="KW-0481">Metalloenzyme inhibitor</keyword>
<keyword id="KW-0483">Metalloprotease inhibitor</keyword>
<keyword id="KW-0646">Protease inhibitor</keyword>
<keyword id="KW-0873">Pyrrolidone carboxylic acid</keyword>
<keyword id="KW-0677">Repeat</keyword>
<keyword id="KW-0964">Secreted</keyword>
<keyword id="KW-0732">Signal</keyword>
<keyword id="KW-0800">Toxin</keyword>
<keyword id="KW-0838">Vasoactive</keyword>
<keyword id="KW-0840">Vasodilator</keyword>
<evidence type="ECO:0000250" key="1">
    <source>
        <dbReference type="UniProtKB" id="P0C7P5"/>
    </source>
</evidence>
<evidence type="ECO:0000250" key="2">
    <source>
        <dbReference type="UniProtKB" id="P0DMD6"/>
    </source>
</evidence>
<evidence type="ECO:0000250" key="3">
    <source>
        <dbReference type="UniProtKB" id="Q27J49"/>
    </source>
</evidence>
<evidence type="ECO:0000250" key="4">
    <source>
        <dbReference type="UniProtKB" id="Q6LEM5"/>
    </source>
</evidence>
<evidence type="ECO:0000250" key="5">
    <source>
        <dbReference type="UniProtKB" id="Q9PW56"/>
    </source>
</evidence>
<evidence type="ECO:0000255" key="6"/>
<evidence type="ECO:0000256" key="7">
    <source>
        <dbReference type="SAM" id="MobiDB-lite"/>
    </source>
</evidence>
<evidence type="ECO:0000269" key="8">
    <source>
    </source>
</evidence>
<evidence type="ECO:0000269" key="9">
    <source>
    </source>
</evidence>
<evidence type="ECO:0000269" key="10">
    <source>
    </source>
</evidence>
<evidence type="ECO:0000269" key="11">
    <source>
    </source>
</evidence>
<evidence type="ECO:0000269" key="12">
    <source>
    </source>
</evidence>
<evidence type="ECO:0000269" key="13">
    <source>
    </source>
</evidence>
<evidence type="ECO:0000269" key="14">
    <source>
    </source>
</evidence>
<evidence type="ECO:0000303" key="15">
    <source>
    </source>
</evidence>
<evidence type="ECO:0000303" key="16">
    <source>
    </source>
</evidence>
<evidence type="ECO:0000303" key="17">
    <source>
    </source>
</evidence>
<evidence type="ECO:0000305" key="18"/>
<comment type="function">
    <molecule>Bradykinin-potentiating peptide 5a</molecule>
    <text>Modestly inhibits ACE (with highest affinity for the N-site) and reveals strong bradykinin-potentiating activity. Induces nitric oxide (NO) production depended on muscarinic acetylcholine receptor M1 subtype (CHRM1) and bradykinin B2 receptor (BDKRB2) activation. Both these receptors contribute to the vasodilation induced by this peptide that may have an indirect action on BDKRB2 and a direct agonistic action on CHRM1.</text>
</comment>
<comment type="function">
    <molecule>Bradykinin-potentiating peptide 10c</molecule>
    <text evidence="8 10 12 13">Peptide with several activities. It inhibits the activity of the angiotensin-converting enzyme (ACE) by a preferential interaction with its C-domain (PubMed:11994001). It evokes transient hypotension (-14 mmHg) similar to that evoked by 0.5 ug of bradykinin, when injected alone into rats. It has a high bradykinin-potentiating effect (120%), when 60 nmol of BPP-10c are coinjected with 0.5 ug of bradykinin into rats (PubMed:22869554). Does not affect angiotensin-1 pressor effects. Shows potent and long-lasting antihypertensive activity as well as a reduction of the heart rate (PubMed:17475904). It also binds and dose-dependently promotes the activation of cytosolic argininosuccinate synthase (ASS1), an enzyme that catalyzes the conversion of citrulline, L-aspartate and ATP to argininosuccinate, AMP and pyrophosphate. It also enhances ASS1-dependent arginine production in HEK 293 cells, as well as in spontaneous hypertensive rat (SHR) and Wistar rat plasma. In addition, it induces the production of nitric-oxide (NO) by HUVEC cells via the endothelial nitric-oxide synthase (NOS3), which use arginine as a substrate and produce NO. It has been shown to be internalized by ASS1-expressing endothelial (HUVEC) and kidney (HEK 293) cells, and is detected homogenously distributed within the cell cytoplasm for up to 2 hours (PubMed:19491403).</text>
</comment>
<comment type="function">
    <molecule>C-type natriuretic peptide</molecule>
    <text evidence="1">has a vasorelaxant activity in rat aortic strips and a diuretic potency in anesthetized rats (By similarity). May act by activating natriuretic receptors (NPR1 and/or NPR2).</text>
</comment>
<comment type="subcellular location">
    <subcellularLocation>
        <location evidence="11">Secreted</location>
    </subcellularLocation>
    <subcellularLocation>
        <location>Cytoplasm</location>
        <location>Cytosol</location>
    </subcellularLocation>
    <text>BPP-10c is internalized in the cytosol of prey cells.</text>
</comment>
<comment type="tissue specificity">
    <text evidence="9 14">Expressed by the venom gland.</text>
</comment>
<comment type="mass spectrometry" mass="1370.81" method="MALDI" evidence="9">
    <molecule>Bradykinin-potentiating peptide 13a</molecule>
</comment>
<comment type="mass spectrometry" mass="1196.41" method="MALDI" evidence="9">
    <molecule>Bradykinin-potentiating peptide 10c</molecule>
</comment>
<comment type="mass spectrometry" mass="1279.5" method="MALDI" evidence="9">
    <molecule>Bradykinin-potentiating peptide 12b</molecule>
</comment>
<comment type="similarity">
    <text evidence="18">In the N-terminal section; belongs to the bradykinin-potentiating peptide family.</text>
</comment>
<comment type="similarity">
    <text evidence="18">In the C-terminal section; belongs to the natriuretic peptide family.</text>
</comment>
<accession>P68515</accession>
<accession>P01020</accession>
<accession>P30421</accession>
<accession>P30422</accession>
<accession>P30423</accession>
<accession>P30425</accession>
<accession>Q8QG91</accession>
<reference key="1">
    <citation type="journal article" date="2002" name="Gene">
        <title>A survey of gene expression and diversity in the venom glands of the pitviper snake Bothrops insularis through the generation of expressed sequence tags (ESTs).</title>
        <authorList>
            <person name="Junqueira-de-Azevedo I.L.M."/>
            <person name="Ho P.L."/>
        </authorList>
    </citation>
    <scope>NUCLEOTIDE SEQUENCE [MRNA]</scope>
    <source>
        <tissue>Venom gland</tissue>
    </source>
</reference>
<reference key="2">
    <citation type="journal article" date="1990" name="J. Protein Chem.">
        <title>Primary structure and biological activity of bradykinin potentiating peptides from Bothrops insularis snake venom.</title>
        <authorList>
            <person name="Cintra A.C.O."/>
            <person name="Vieira C.A."/>
            <person name="Giglio J.R."/>
        </authorList>
    </citation>
    <scope>PROTEIN SEQUENCE OF 31-43; 51-63; 71-80; 88-99; 121-125 AND 127-131 (BPP-13A; BPP-10C; BPP-12B AND BPP-5A)</scope>
    <scope>SUBCELLULAR LOCATION</scope>
    <scope>TISSUE SPECIFICITY</scope>
    <scope>PYROGLUTAMATE FORMATION AT GLN-31; GLN-51; GLN-71; GLN-88; GLN-121 AND GLN-127</scope>
    <source>
        <tissue>Venom</tissue>
    </source>
</reference>
<reference key="3">
    <citation type="journal article" date="2005" name="Rapid Commun. Mass Spectrom.">
        <title>Fast analysis of low molecular mass compounds present in snake venom: identification of ten new pyroglutamate-containing peptides.</title>
        <authorList>
            <person name="Wermelinger L.S."/>
            <person name="Dutra D.L."/>
            <person name="Oliveira-Carvalho A.L."/>
            <person name="Soares M.R."/>
            <person name="Bloch C. Jr."/>
            <person name="Zingali R.B."/>
        </authorList>
    </citation>
    <scope>PROTEIN SEQUENCE OF 31-43; 51-63; 71-80 AND 88-99 (BPP-13A; BPP-10C AND BPP-12B)</scope>
    <scope>SUBCELLULAR LOCATION</scope>
    <scope>TISSUE SPECIFICITY</scope>
    <scope>MASS SPECTROMETRY</scope>
    <scope>PYROGLUTAMATE FORMATION AT GLN-31; GLN-51; GLN-71 AND GLN-88</scope>
    <source>
        <tissue>Venom</tissue>
    </source>
</reference>
<reference key="4">
    <citation type="journal article" date="2008" name="J. Mass Spectrom.">
        <title>Peptide fingerprinting of snake venoms by direct infusion nano-electrospray ionization mass spectrometry: potential use in venom identification and taxonomy.</title>
        <authorList>
            <person name="Souza G.H.M.F."/>
            <person name="Catharino R.R."/>
            <person name="Ifa D.R."/>
            <person name="Eberlin M.N."/>
            <person name="Hyslop S."/>
        </authorList>
    </citation>
    <scope>PROTEIN SEQUENCE OF 31-43 AND 51-63 (BPP-13A)</scope>
    <scope>IDENTIFICATION BY MASS SPECTROMETRY</scope>
    <scope>SUBCELLULAR LOCATION</scope>
    <scope>PYROGLUTAMATE FORMATION AT GLN-31 AND GLN-51</scope>
    <source>
        <tissue>Venom</tissue>
    </source>
</reference>
<reference key="5">
    <citation type="journal article" date="2002" name="Biochemistry">
        <title>Selective inhibition of the C-domain of angiotensin I converting enzyme by bradykinin potentiating peptides.</title>
        <authorList>
            <person name="Cotton J."/>
            <person name="Hayashi M.A."/>
            <person name="Cuniasse P."/>
            <person name="Vazeux G."/>
            <person name="Ianzer D."/>
            <person name="De Camargo A.C."/>
            <person name="Dive V."/>
        </authorList>
    </citation>
    <scope>SYNTHESIS OF 71-80 (BPP-10C)</scope>
    <scope>FUNCTION</scope>
</reference>
<reference key="6">
    <citation type="journal article" date="2007" name="J. Pharmacol. Exp. Ther.">
        <title>Do the cardiovascular effects of angiotensin-converting enzyme (ACE) I involve ACE-independent mechanisms? new insights from proline-rich peptides of Bothrops jararaca.</title>
        <authorList>
            <person name="Ianzer D."/>
            <person name="Santos R.A."/>
            <person name="Etelvino G.M."/>
            <person name="Xavier C.H."/>
            <person name="de Almeida Santos J."/>
            <person name="Mendes E.P."/>
            <person name="Machado L.T."/>
            <person name="Prezoto B.C."/>
            <person name="Dive V."/>
            <person name="de Camargo A.C."/>
        </authorList>
    </citation>
    <scope>FUNCTION (BPP-10C)</scope>
</reference>
<reference key="7">
    <citation type="journal article" date="2009" name="J. Biol. Chem.">
        <title>Argininosuccinate synthetase is a functional target for a snake venom anti-hypertensive peptide: role in arginine and nitric oxide production.</title>
        <authorList>
            <person name="Guerreiro J.R."/>
            <person name="Lameu C."/>
            <person name="Oliveira E.F."/>
            <person name="Klitzke C.F."/>
            <person name="Melo R.L."/>
            <person name="Linares E."/>
            <person name="Augusto O."/>
            <person name="Fox J.W."/>
            <person name="Lebrun I."/>
            <person name="Serrano S.M."/>
            <person name="Camargo A.C."/>
        </authorList>
    </citation>
    <scope>FUNCTION</scope>
    <scope>BIOASSAY</scope>
    <scope>SUBCELLULAR LOCATION</scope>
    <scope>MUTAGENESIS OF PRO-74; PRO-76; ILE-78; PRO-79 AND PRO-80</scope>
</reference>
<reference key="8">
    <citation type="journal article" date="2011" name="Biochem. Pharmacol.">
        <title>Bj-PRO-5a, a natural angiotensin-converting enzyme inhibitor, promotes vasodilatation mediated by both bradykinin B(2)and M1 muscarinic acetylcholine receptors.</title>
        <authorList>
            <person name="Morais K.L."/>
            <person name="Hayashi M.A."/>
            <person name="Bruni F.M."/>
            <person name="Lopes-Ferreira M."/>
            <person name="Camargo A.C."/>
            <person name="Ulrich H."/>
            <person name="Lameu C."/>
        </authorList>
    </citation>
    <scope>SYNTHESIS OF 121-125 AND 127-131 (BPP-5A)</scope>
    <scope>FUNCTION</scope>
</reference>
<reference key="9">
    <citation type="journal article" date="2012" name="Mol. Cell. Proteomics">
        <title>Peptidomics of three Bothrops snake venoms: insights into the molecular diversification of proteomes and peptidomes.</title>
        <authorList>
            <person name="Tashima A.K."/>
            <person name="Zelanis A."/>
            <person name="Kitano E.S."/>
            <person name="Ianzer D."/>
            <person name="Melo R.L."/>
            <person name="Rioli V."/>
            <person name="Sant'anna S.S."/>
            <person name="Schenberg A.C."/>
            <person name="Camargo A.C."/>
            <person name="Serrano S.M.T."/>
        </authorList>
    </citation>
    <scope>SYNTHESIS OF 71-80 (BPP-10C)</scope>
    <scope>FUNCTION</scope>
</reference>
<proteinExistence type="evidence at protein level"/>
<name>BNP_BOTIN</name>
<sequence length="265" mass="27763">MVLSRLAASGLLLLALLALSVDGKPVQQWAQGGWPRPGPEIPPLKVQQWAQGGWPRPGPEIPPLTVQQWAQNWPHPQIPPLTVQQWAQLGPPPRPQIPPLEVQQWAQGRAPHPPIPPAPLQKWAPVQKWAPLLQPHESPASGTTALREELSLGPEAASGVPSAGAEVGRSGSKAPAAPHRLSKSKGAAATSAASRPMRDLRPDGKQARQNWGRMVHHDHHAAVGGGGGGGGGGARRLKGLAKKGAAKGCFGLKLDRIGTMSGLGC</sequence>
<feature type="signal peptide" evidence="6">
    <location>
        <begin position="1"/>
        <end position="23"/>
    </location>
</feature>
<feature type="propeptide" id="PRO_0000334179" evidence="18">
    <location>
        <begin position="24"/>
        <end position="30"/>
    </location>
</feature>
<feature type="peptide" id="PRO_0000043507" description="Bradykinin-potentiating peptide 13a" evidence="9 11 14">
    <location>
        <begin position="31"/>
        <end position="43"/>
    </location>
</feature>
<feature type="propeptide" id="PRO_0000334180" evidence="18">
    <location>
        <begin position="44"/>
        <end position="50"/>
    </location>
</feature>
<feature type="peptide" id="PRO_0000334181" description="Bradykinin-potentiating peptide 13a" evidence="9 11 14">
    <location>
        <begin position="51"/>
        <end position="63"/>
    </location>
</feature>
<feature type="propeptide" id="PRO_0000334182" evidence="18">
    <location>
        <begin position="64"/>
        <end position="70"/>
    </location>
</feature>
<feature type="peptide" id="PRO_0000043508" description="Bradykinin-potentiating peptide 10c" evidence="9 14">
    <location>
        <begin position="71"/>
        <end position="80"/>
    </location>
</feature>
<feature type="propeptide" id="PRO_0000334183" evidence="18">
    <location>
        <begin position="81"/>
        <end position="87"/>
    </location>
</feature>
<feature type="peptide" id="PRO_0000043509" description="Bradykinin-potentiating peptide 12b" evidence="9 14">
    <location>
        <begin position="88"/>
        <end position="99"/>
    </location>
</feature>
<feature type="propeptide" id="PRO_0000334184" evidence="18">
    <location>
        <begin position="100"/>
        <end position="106"/>
    </location>
</feature>
<feature type="peptide" id="PRO_0000334185" description="Bradykinin-potentiating peptide 11e" evidence="5">
    <location>
        <begin position="107"/>
        <end position="117"/>
    </location>
</feature>
<feature type="propeptide" id="PRO_0000334186" evidence="18">
    <location>
        <begin position="118"/>
        <end position="120"/>
    </location>
</feature>
<feature type="peptide" id="PRO_0000043511" description="Bradykinin-potentiating peptide 5a" evidence="14">
    <location>
        <begin position="121"/>
        <end position="125"/>
    </location>
</feature>
<feature type="propeptide" id="PRO_0000334187" evidence="18">
    <location>
        <position position="126"/>
    </location>
</feature>
<feature type="peptide" id="PRO_0000334188" description="Bradykinin-potentiating peptide 5a" evidence="14">
    <location>
        <begin position="127"/>
        <end position="131"/>
    </location>
</feature>
<feature type="propeptide" id="PRO_0000334189" evidence="18">
    <location>
        <begin position="132"/>
        <end position="241"/>
    </location>
</feature>
<feature type="peptide" id="PRO_0000334190" description="C-type natriuretic peptide" evidence="3">
    <location>
        <begin position="244"/>
        <end position="265"/>
    </location>
</feature>
<feature type="region of interest" description="Disordered" evidence="7">
    <location>
        <begin position="153"/>
        <end position="211"/>
    </location>
</feature>
<feature type="compositionally biased region" description="Low complexity" evidence="7">
    <location>
        <begin position="184"/>
        <end position="194"/>
    </location>
</feature>
<feature type="compositionally biased region" description="Basic and acidic residues" evidence="7">
    <location>
        <begin position="196"/>
        <end position="206"/>
    </location>
</feature>
<feature type="modified residue" description="Pyrrolidone carboxylic acid" evidence="9 11 14">
    <location>
        <position position="31"/>
    </location>
</feature>
<feature type="modified residue" description="Pyrrolidone carboxylic acid" evidence="9 11 14">
    <location>
        <position position="51"/>
    </location>
</feature>
<feature type="modified residue" description="Pyrrolidone carboxylic acid" evidence="9 14">
    <location>
        <position position="71"/>
    </location>
</feature>
<feature type="modified residue" description="Pyrrolidone carboxylic acid" evidence="9 14">
    <location>
        <position position="88"/>
    </location>
</feature>
<feature type="modified residue" description="Pyrrolidone carboxylic acid" evidence="5">
    <location>
        <position position="107"/>
    </location>
</feature>
<feature type="modified residue" description="Pyrrolidone carboxylic acid" evidence="14">
    <location>
        <position position="121"/>
    </location>
</feature>
<feature type="modified residue" description="Pyrrolidone carboxylic acid" evidence="14">
    <location>
        <position position="127"/>
    </location>
</feature>
<feature type="disulfide bond" evidence="2">
    <location>
        <begin position="249"/>
        <end position="265"/>
    </location>
</feature>
<feature type="mutagenesis site" description="Low decrease in ability to enhance AsS activity." evidence="12">
    <original>P</original>
    <variation>A</variation>
    <location>
        <position position="74"/>
    </location>
</feature>
<feature type="mutagenesis site" description="Low decrease in ability to enhance AsS activity." evidence="12">
    <original>P</original>
    <variation>A</variation>
    <location>
        <position position="76"/>
    </location>
</feature>
<feature type="mutagenesis site" description="Low decrease in ability to enhance AsS activity." evidence="12">
    <original>I</original>
    <variation>A</variation>
    <location>
        <position position="78"/>
    </location>
</feature>
<feature type="mutagenesis site" description="Important decrease in ability to enhance AsS activity." evidence="12">
    <original>P</original>
    <variation>A</variation>
    <location>
        <position position="79"/>
    </location>
</feature>
<feature type="mutagenesis site" description="Important decrease in ability to enhance AsS activity." evidence="12">
    <original>P</original>
    <variation>A</variation>
    <location>
        <position position="80"/>
    </location>
</feature>
<feature type="sequence conflict" description="In Ref. 2; AA sequence." evidence="18" ref="2">
    <location>
        <position position="92"/>
    </location>
</feature>
<dbReference type="EMBL" id="AF490531">
    <property type="protein sequence ID" value="AAM09690.1"/>
    <property type="molecule type" value="mRNA"/>
</dbReference>
<dbReference type="PIR" id="B37196">
    <property type="entry name" value="B37196"/>
</dbReference>
<dbReference type="PIR" id="C37196">
    <property type="entry name" value="C37196"/>
</dbReference>
<dbReference type="PIR" id="G37196">
    <property type="entry name" value="G37196"/>
</dbReference>
<dbReference type="GO" id="GO:0005829">
    <property type="term" value="C:cytosol"/>
    <property type="evidence" value="ECO:0007669"/>
    <property type="project" value="UniProtKB-SubCell"/>
</dbReference>
<dbReference type="GO" id="GO:0005576">
    <property type="term" value="C:extracellular region"/>
    <property type="evidence" value="ECO:0000250"/>
    <property type="project" value="UniProtKB"/>
</dbReference>
<dbReference type="GO" id="GO:0005179">
    <property type="term" value="F:hormone activity"/>
    <property type="evidence" value="ECO:0007669"/>
    <property type="project" value="InterPro"/>
</dbReference>
<dbReference type="GO" id="GO:0030414">
    <property type="term" value="F:peptidase inhibitor activity"/>
    <property type="evidence" value="ECO:0007669"/>
    <property type="project" value="UniProtKB-KW"/>
</dbReference>
<dbReference type="GO" id="GO:0090729">
    <property type="term" value="F:toxin activity"/>
    <property type="evidence" value="ECO:0007669"/>
    <property type="project" value="UniProtKB-KW"/>
</dbReference>
<dbReference type="GO" id="GO:0006182">
    <property type="term" value="P:cGMP biosynthetic process"/>
    <property type="evidence" value="ECO:0007669"/>
    <property type="project" value="TreeGrafter"/>
</dbReference>
<dbReference type="GO" id="GO:0007168">
    <property type="term" value="P:receptor guanylyl cyclase signaling pathway"/>
    <property type="evidence" value="ECO:0007669"/>
    <property type="project" value="TreeGrafter"/>
</dbReference>
<dbReference type="GO" id="GO:0008217">
    <property type="term" value="P:regulation of blood pressure"/>
    <property type="evidence" value="ECO:0007669"/>
    <property type="project" value="UniProtKB-KW"/>
</dbReference>
<dbReference type="GO" id="GO:0042311">
    <property type="term" value="P:vasodilation"/>
    <property type="evidence" value="ECO:0007669"/>
    <property type="project" value="UniProtKB-KW"/>
</dbReference>
<dbReference type="InterPro" id="IPR000663">
    <property type="entry name" value="Natr_peptide"/>
</dbReference>
<dbReference type="InterPro" id="IPR030480">
    <property type="entry name" value="Natr_peptide_CS"/>
</dbReference>
<dbReference type="PANTHER" id="PTHR12167">
    <property type="entry name" value="C-TYPE NATRIURETIC PEPTIDE"/>
    <property type="match status" value="1"/>
</dbReference>
<dbReference type="PANTHER" id="PTHR12167:SF2">
    <property type="entry name" value="C-TYPE NATRIURETIC PEPTIDE"/>
    <property type="match status" value="1"/>
</dbReference>
<dbReference type="Pfam" id="PF00212">
    <property type="entry name" value="ANP"/>
    <property type="match status" value="1"/>
</dbReference>
<dbReference type="PRINTS" id="PR00710">
    <property type="entry name" value="NATPEPTIDES"/>
</dbReference>
<dbReference type="SMART" id="SM00183">
    <property type="entry name" value="NAT_PEP"/>
    <property type="match status" value="1"/>
</dbReference>
<dbReference type="PROSITE" id="PS00263">
    <property type="entry name" value="NATRIURETIC_PEPTIDE"/>
    <property type="match status" value="1"/>
</dbReference>
<organism>
    <name type="scientific">Bothrops insularis</name>
    <name type="common">Golden lancehead</name>
    <name type="synonym">Lachesis insularis</name>
    <dbReference type="NCBI Taxonomy" id="8723"/>
    <lineage>
        <taxon>Eukaryota</taxon>
        <taxon>Metazoa</taxon>
        <taxon>Chordata</taxon>
        <taxon>Craniata</taxon>
        <taxon>Vertebrata</taxon>
        <taxon>Euteleostomi</taxon>
        <taxon>Lepidosauria</taxon>
        <taxon>Squamata</taxon>
        <taxon>Bifurcata</taxon>
        <taxon>Unidentata</taxon>
        <taxon>Episquamata</taxon>
        <taxon>Toxicofera</taxon>
        <taxon>Serpentes</taxon>
        <taxon>Colubroidea</taxon>
        <taxon>Viperidae</taxon>
        <taxon>Crotalinae</taxon>
        <taxon>Bothrops</taxon>
    </lineage>
</organism>